<accession>Q9M020</accession>
<comment type="function">
    <text evidence="5">Involved in negative regulation of abscisic acid response in seed germination.</text>
</comment>
<comment type="catalytic activity">
    <reaction>
        <text>L-seryl-[protein] + ATP = O-phospho-L-seryl-[protein] + ADP + H(+)</text>
        <dbReference type="Rhea" id="RHEA:17989"/>
        <dbReference type="Rhea" id="RHEA-COMP:9863"/>
        <dbReference type="Rhea" id="RHEA-COMP:11604"/>
        <dbReference type="ChEBI" id="CHEBI:15378"/>
        <dbReference type="ChEBI" id="CHEBI:29999"/>
        <dbReference type="ChEBI" id="CHEBI:30616"/>
        <dbReference type="ChEBI" id="CHEBI:83421"/>
        <dbReference type="ChEBI" id="CHEBI:456216"/>
        <dbReference type="EC" id="2.7.11.1"/>
    </reaction>
</comment>
<comment type="catalytic activity">
    <reaction>
        <text>L-threonyl-[protein] + ATP = O-phospho-L-threonyl-[protein] + ADP + H(+)</text>
        <dbReference type="Rhea" id="RHEA:46608"/>
        <dbReference type="Rhea" id="RHEA-COMP:11060"/>
        <dbReference type="Rhea" id="RHEA-COMP:11605"/>
        <dbReference type="ChEBI" id="CHEBI:15378"/>
        <dbReference type="ChEBI" id="CHEBI:30013"/>
        <dbReference type="ChEBI" id="CHEBI:30616"/>
        <dbReference type="ChEBI" id="CHEBI:61977"/>
        <dbReference type="ChEBI" id="CHEBI:456216"/>
        <dbReference type="EC" id="2.7.11.1"/>
    </reaction>
</comment>
<comment type="subcellular location">
    <subcellularLocation>
        <location evidence="6">Cell membrane</location>
        <topology evidence="6">Single-pass type I membrane protein</topology>
    </subcellularLocation>
</comment>
<comment type="disruption phenotype">
    <text evidence="5">Slight enhancement in abscisic acid-inhibited germination. Redundant with LECRKA4.1 and LECRKA4.3.</text>
</comment>
<comment type="similarity">
    <text evidence="6">In the C-terminal section; belongs to the protein kinase superfamily. Ser/Thr protein kinase family.</text>
</comment>
<comment type="similarity">
    <text evidence="6">In the N-terminal section; belongs to the leguminous lectin family.</text>
</comment>
<proteinExistence type="evidence at transcript level"/>
<protein>
    <recommendedName>
        <fullName>Lectin-domain containing receptor kinase VI.3</fullName>
        <shortName>LecRK-VI.3</shortName>
        <ecNumber>2.7.11.1</ecNumber>
    </recommendedName>
    <alternativeName>
        <fullName>Lectin receptor kinase A4.2</fullName>
    </alternativeName>
</protein>
<name>LRK63_ARATH</name>
<dbReference type="EC" id="2.7.11.1"/>
<dbReference type="EMBL" id="AL161946">
    <property type="protein sequence ID" value="CAB82271.1"/>
    <property type="molecule type" value="Genomic_DNA"/>
</dbReference>
<dbReference type="EMBL" id="CP002688">
    <property type="status" value="NOT_ANNOTATED_CDS"/>
    <property type="molecule type" value="Genomic_DNA"/>
</dbReference>
<dbReference type="PIR" id="T48176">
    <property type="entry name" value="T48176"/>
</dbReference>
<dbReference type="SMR" id="Q9M020"/>
<dbReference type="BioGRID" id="16976">
    <property type="interactions" value="7"/>
</dbReference>
<dbReference type="FunCoup" id="Q9M020">
    <property type="interactions" value="45"/>
</dbReference>
<dbReference type="IntAct" id="Q9M020">
    <property type="interactions" value="7"/>
</dbReference>
<dbReference type="STRING" id="3702.Q9M020"/>
<dbReference type="GlyGen" id="Q9M020">
    <property type="glycosylation" value="1 site"/>
</dbReference>
<dbReference type="PaxDb" id="3702-AT5G01550.1"/>
<dbReference type="Araport" id="AT5G01550"/>
<dbReference type="TAIR" id="AT5G01550">
    <property type="gene designation" value="LECRK-VI.3"/>
</dbReference>
<dbReference type="eggNOG" id="ENOG502QTCP">
    <property type="taxonomic scope" value="Eukaryota"/>
</dbReference>
<dbReference type="HOGENOM" id="CLU_000288_62_3_1"/>
<dbReference type="InParanoid" id="Q9M020"/>
<dbReference type="PhylomeDB" id="Q9M020"/>
<dbReference type="PRO" id="PR:Q9M020"/>
<dbReference type="Proteomes" id="UP000006548">
    <property type="component" value="Chromosome 5"/>
</dbReference>
<dbReference type="ExpressionAtlas" id="Q9M020">
    <property type="expression patterns" value="baseline and differential"/>
</dbReference>
<dbReference type="GO" id="GO:0005886">
    <property type="term" value="C:plasma membrane"/>
    <property type="evidence" value="ECO:0000318"/>
    <property type="project" value="GO_Central"/>
</dbReference>
<dbReference type="GO" id="GO:0005524">
    <property type="term" value="F:ATP binding"/>
    <property type="evidence" value="ECO:0007669"/>
    <property type="project" value="UniProtKB-KW"/>
</dbReference>
<dbReference type="GO" id="GO:0030246">
    <property type="term" value="F:carbohydrate binding"/>
    <property type="evidence" value="ECO:0007669"/>
    <property type="project" value="UniProtKB-KW"/>
</dbReference>
<dbReference type="GO" id="GO:0106310">
    <property type="term" value="F:protein serine kinase activity"/>
    <property type="evidence" value="ECO:0007669"/>
    <property type="project" value="RHEA"/>
</dbReference>
<dbReference type="GO" id="GO:0004675">
    <property type="term" value="F:transmembrane receptor protein serine/threonine kinase activity"/>
    <property type="evidence" value="ECO:0000318"/>
    <property type="project" value="GO_Central"/>
</dbReference>
<dbReference type="GO" id="GO:0009738">
    <property type="term" value="P:abscisic acid-activated signaling pathway"/>
    <property type="evidence" value="ECO:0000315"/>
    <property type="project" value="TAIR"/>
</dbReference>
<dbReference type="GO" id="GO:0042742">
    <property type="term" value="P:defense response to bacterium"/>
    <property type="evidence" value="ECO:0000318"/>
    <property type="project" value="GO_Central"/>
</dbReference>
<dbReference type="GO" id="GO:0002229">
    <property type="term" value="P:defense response to oomycetes"/>
    <property type="evidence" value="ECO:0000318"/>
    <property type="project" value="GO_Central"/>
</dbReference>
<dbReference type="GO" id="GO:0009845">
    <property type="term" value="P:seed germination"/>
    <property type="evidence" value="ECO:0000315"/>
    <property type="project" value="TAIR"/>
</dbReference>
<dbReference type="CDD" id="cd06899">
    <property type="entry name" value="lectin_legume_LecRK_Arcelin_ConA"/>
    <property type="match status" value="1"/>
</dbReference>
<dbReference type="CDD" id="cd14066">
    <property type="entry name" value="STKc_IRAK"/>
    <property type="match status" value="1"/>
</dbReference>
<dbReference type="FunFam" id="1.10.510.10:FF:000108">
    <property type="entry name" value="L-type lectin-domain containing receptor kinase S.4"/>
    <property type="match status" value="1"/>
</dbReference>
<dbReference type="FunFam" id="2.60.120.200:FF:000096">
    <property type="entry name" value="L-type lectin-domain containing receptor kinase V.9"/>
    <property type="match status" value="1"/>
</dbReference>
<dbReference type="FunFam" id="3.30.200.20:FF:000491">
    <property type="entry name" value="Lectin-domain containing receptor kinase VI.3"/>
    <property type="match status" value="1"/>
</dbReference>
<dbReference type="Gene3D" id="2.60.120.200">
    <property type="match status" value="1"/>
</dbReference>
<dbReference type="Gene3D" id="3.30.200.20">
    <property type="entry name" value="Phosphorylase Kinase, domain 1"/>
    <property type="match status" value="1"/>
</dbReference>
<dbReference type="Gene3D" id="1.10.510.10">
    <property type="entry name" value="Transferase(Phosphotransferase) domain 1"/>
    <property type="match status" value="1"/>
</dbReference>
<dbReference type="InterPro" id="IPR013320">
    <property type="entry name" value="ConA-like_dom_sf"/>
</dbReference>
<dbReference type="InterPro" id="IPR011009">
    <property type="entry name" value="Kinase-like_dom_sf"/>
</dbReference>
<dbReference type="InterPro" id="IPR050528">
    <property type="entry name" value="L-type_Lectin-RKs"/>
</dbReference>
<dbReference type="InterPro" id="IPR001220">
    <property type="entry name" value="Legume_lectin_dom"/>
</dbReference>
<dbReference type="InterPro" id="IPR000719">
    <property type="entry name" value="Prot_kinase_dom"/>
</dbReference>
<dbReference type="InterPro" id="IPR017441">
    <property type="entry name" value="Protein_kinase_ATP_BS"/>
</dbReference>
<dbReference type="InterPro" id="IPR008271">
    <property type="entry name" value="Ser/Thr_kinase_AS"/>
</dbReference>
<dbReference type="PANTHER" id="PTHR27007">
    <property type="match status" value="1"/>
</dbReference>
<dbReference type="Pfam" id="PF00139">
    <property type="entry name" value="Lectin_legB"/>
    <property type="match status" value="1"/>
</dbReference>
<dbReference type="Pfam" id="PF00069">
    <property type="entry name" value="Pkinase"/>
    <property type="match status" value="1"/>
</dbReference>
<dbReference type="SMART" id="SM00220">
    <property type="entry name" value="S_TKc"/>
    <property type="match status" value="1"/>
</dbReference>
<dbReference type="SUPFAM" id="SSF49899">
    <property type="entry name" value="Concanavalin A-like lectins/glucanases"/>
    <property type="match status" value="1"/>
</dbReference>
<dbReference type="SUPFAM" id="SSF56112">
    <property type="entry name" value="Protein kinase-like (PK-like)"/>
    <property type="match status" value="1"/>
</dbReference>
<dbReference type="PROSITE" id="PS00107">
    <property type="entry name" value="PROTEIN_KINASE_ATP"/>
    <property type="match status" value="1"/>
</dbReference>
<dbReference type="PROSITE" id="PS50011">
    <property type="entry name" value="PROTEIN_KINASE_DOM"/>
    <property type="match status" value="1"/>
</dbReference>
<dbReference type="PROSITE" id="PS00108">
    <property type="entry name" value="PROTEIN_KINASE_ST"/>
    <property type="match status" value="1"/>
</dbReference>
<reference key="1">
    <citation type="journal article" date="2000" name="Nature">
        <title>Sequence and analysis of chromosome 5 of the plant Arabidopsis thaliana.</title>
        <authorList>
            <person name="Tabata S."/>
            <person name="Kaneko T."/>
            <person name="Nakamura Y."/>
            <person name="Kotani H."/>
            <person name="Kato T."/>
            <person name="Asamizu E."/>
            <person name="Miyajima N."/>
            <person name="Sasamoto S."/>
            <person name="Kimura T."/>
            <person name="Hosouchi T."/>
            <person name="Kawashima K."/>
            <person name="Kohara M."/>
            <person name="Matsumoto M."/>
            <person name="Matsuno A."/>
            <person name="Muraki A."/>
            <person name="Nakayama S."/>
            <person name="Nakazaki N."/>
            <person name="Naruo K."/>
            <person name="Okumura S."/>
            <person name="Shinpo S."/>
            <person name="Takeuchi C."/>
            <person name="Wada T."/>
            <person name="Watanabe A."/>
            <person name="Yamada M."/>
            <person name="Yasuda M."/>
            <person name="Sato S."/>
            <person name="de la Bastide M."/>
            <person name="Huang E."/>
            <person name="Spiegel L."/>
            <person name="Gnoj L."/>
            <person name="O'Shaughnessy A."/>
            <person name="Preston R."/>
            <person name="Habermann K."/>
            <person name="Murray J."/>
            <person name="Johnson D."/>
            <person name="Rohlfing T."/>
            <person name="Nelson J."/>
            <person name="Stoneking T."/>
            <person name="Pepin K."/>
            <person name="Spieth J."/>
            <person name="Sekhon M."/>
            <person name="Armstrong J."/>
            <person name="Becker M."/>
            <person name="Belter E."/>
            <person name="Cordum H."/>
            <person name="Cordes M."/>
            <person name="Courtney L."/>
            <person name="Courtney W."/>
            <person name="Dante M."/>
            <person name="Du H."/>
            <person name="Edwards J."/>
            <person name="Fryman J."/>
            <person name="Haakensen B."/>
            <person name="Lamar E."/>
            <person name="Latreille P."/>
            <person name="Leonard S."/>
            <person name="Meyer R."/>
            <person name="Mulvaney E."/>
            <person name="Ozersky P."/>
            <person name="Riley A."/>
            <person name="Strowmatt C."/>
            <person name="Wagner-McPherson C."/>
            <person name="Wollam A."/>
            <person name="Yoakum M."/>
            <person name="Bell M."/>
            <person name="Dedhia N."/>
            <person name="Parnell L."/>
            <person name="Shah R."/>
            <person name="Rodriguez M."/>
            <person name="Hoon See L."/>
            <person name="Vil D."/>
            <person name="Baker J."/>
            <person name="Kirchoff K."/>
            <person name="Toth K."/>
            <person name="King L."/>
            <person name="Bahret A."/>
            <person name="Miller B."/>
            <person name="Marra M.A."/>
            <person name="Martienssen R."/>
            <person name="McCombie W.R."/>
            <person name="Wilson R.K."/>
            <person name="Murphy G."/>
            <person name="Bancroft I."/>
            <person name="Volckaert G."/>
            <person name="Wambutt R."/>
            <person name="Duesterhoeft A."/>
            <person name="Stiekema W."/>
            <person name="Pohl T."/>
            <person name="Entian K.-D."/>
            <person name="Terryn N."/>
            <person name="Hartley N."/>
            <person name="Bent E."/>
            <person name="Johnson S."/>
            <person name="Langham S.-A."/>
            <person name="McCullagh B."/>
            <person name="Robben J."/>
            <person name="Grymonprez B."/>
            <person name="Zimmermann W."/>
            <person name="Ramsperger U."/>
            <person name="Wedler H."/>
            <person name="Balke K."/>
            <person name="Wedler E."/>
            <person name="Peters S."/>
            <person name="van Staveren M."/>
            <person name="Dirkse W."/>
            <person name="Mooijman P."/>
            <person name="Klein Lankhorst R."/>
            <person name="Weitzenegger T."/>
            <person name="Bothe G."/>
            <person name="Rose M."/>
            <person name="Hauf J."/>
            <person name="Berneiser S."/>
            <person name="Hempel S."/>
            <person name="Feldpausch M."/>
            <person name="Lamberth S."/>
            <person name="Villarroel R."/>
            <person name="Gielen J."/>
            <person name="Ardiles W."/>
            <person name="Bents O."/>
            <person name="Lemcke K."/>
            <person name="Kolesov G."/>
            <person name="Mayer K.F.X."/>
            <person name="Rudd S."/>
            <person name="Schoof H."/>
            <person name="Schueller C."/>
            <person name="Zaccaria P."/>
            <person name="Mewes H.-W."/>
            <person name="Bevan M."/>
            <person name="Fransz P.F."/>
        </authorList>
    </citation>
    <scope>NUCLEOTIDE SEQUENCE [LARGE SCALE GENOMIC DNA]</scope>
    <source>
        <strain>cv. Columbia</strain>
    </source>
</reference>
<reference key="2">
    <citation type="journal article" date="2017" name="Plant J.">
        <title>Araport11: a complete reannotation of the Arabidopsis thaliana reference genome.</title>
        <authorList>
            <person name="Cheng C.Y."/>
            <person name="Krishnakumar V."/>
            <person name="Chan A.P."/>
            <person name="Thibaud-Nissen F."/>
            <person name="Schobel S."/>
            <person name="Town C.D."/>
        </authorList>
    </citation>
    <scope>GENOME REANNOTATION</scope>
    <source>
        <strain>cv. Columbia</strain>
    </source>
</reference>
<reference key="3">
    <citation type="journal article" date="2002" name="Crit. Rev. Plant Sci.">
        <title>Lectin receptor kinases in plants.</title>
        <authorList>
            <person name="Barre A."/>
            <person name="Herve C."/>
            <person name="Lescure B."/>
            <person name="Rouge P."/>
        </authorList>
    </citation>
    <scope>GENE FAMILY</scope>
</reference>
<reference key="4">
    <citation type="journal article" date="2009" name="J. Exp. Bot.">
        <title>Arabidopsis L-type lectin receptor kinases: phylogeny, classification, and expression profiles.</title>
        <authorList>
            <person name="Bouwmeester K."/>
            <person name="Govers F."/>
        </authorList>
    </citation>
    <scope>GENE FAMILY</scope>
    <scope>NOMENCLATURE</scope>
</reference>
<reference key="5">
    <citation type="journal article" date="2009" name="Plant Physiol.">
        <title>The Arabidopsis a4 subfamily of lectin receptor kinases negatively regulates abscisic acid response in seed germination.</title>
        <authorList>
            <person name="Xin Z."/>
            <person name="Wang A."/>
            <person name="Yang G."/>
            <person name="Gao P."/>
            <person name="Zheng Z.-L."/>
        </authorList>
    </citation>
    <scope>FUNCTION</scope>
    <scope>DISRUPTION PHENOTYPE</scope>
</reference>
<feature type="signal peptide" evidence="1">
    <location>
        <begin position="1"/>
        <end position="14"/>
    </location>
</feature>
<feature type="chain" id="PRO_0000364130" description="Lectin-domain containing receptor kinase VI.3">
    <location>
        <begin position="15"/>
        <end position="688"/>
    </location>
</feature>
<feature type="topological domain" description="Extracellular" evidence="1">
    <location>
        <begin position="15"/>
        <end position="306"/>
    </location>
</feature>
<feature type="transmembrane region" description="Helical" evidence="1">
    <location>
        <begin position="307"/>
        <end position="327"/>
    </location>
</feature>
<feature type="topological domain" description="Cytoplasmic" evidence="1">
    <location>
        <begin position="328"/>
        <end position="688"/>
    </location>
</feature>
<feature type="domain" description="Protein kinase" evidence="2">
    <location>
        <begin position="361"/>
        <end position="640"/>
    </location>
</feature>
<feature type="region of interest" description="Legume-lectin like">
    <location>
        <begin position="22"/>
        <end position="271"/>
    </location>
</feature>
<feature type="region of interest" description="Disordered" evidence="4">
    <location>
        <begin position="662"/>
        <end position="688"/>
    </location>
</feature>
<feature type="active site" description="Proton acceptor" evidence="2 3">
    <location>
        <position position="490"/>
    </location>
</feature>
<feature type="binding site" evidence="2">
    <location>
        <begin position="367"/>
        <end position="375"/>
    </location>
    <ligand>
        <name>ATP</name>
        <dbReference type="ChEBI" id="CHEBI:30616"/>
    </ligand>
</feature>
<feature type="binding site" evidence="2">
    <location>
        <position position="391"/>
    </location>
    <ligand>
        <name>ATP</name>
        <dbReference type="ChEBI" id="CHEBI:30616"/>
    </ligand>
</feature>
<gene>
    <name type="primary">LECRK63</name>
    <name type="synonym">LECRKA4.2</name>
    <name type="ordered locus">At5g01550</name>
    <name type="ORF">F7A7.70</name>
</gene>
<evidence type="ECO:0000255" key="1"/>
<evidence type="ECO:0000255" key="2">
    <source>
        <dbReference type="PROSITE-ProRule" id="PRU00159"/>
    </source>
</evidence>
<evidence type="ECO:0000255" key="3">
    <source>
        <dbReference type="PROSITE-ProRule" id="PRU10027"/>
    </source>
</evidence>
<evidence type="ECO:0000256" key="4">
    <source>
        <dbReference type="SAM" id="MobiDB-lite"/>
    </source>
</evidence>
<evidence type="ECO:0000269" key="5">
    <source>
    </source>
</evidence>
<evidence type="ECO:0000305" key="6"/>
<keyword id="KW-0067">ATP-binding</keyword>
<keyword id="KW-1003">Cell membrane</keyword>
<keyword id="KW-0418">Kinase</keyword>
<keyword id="KW-0430">Lectin</keyword>
<keyword id="KW-0472">Membrane</keyword>
<keyword id="KW-0547">Nucleotide-binding</keyword>
<keyword id="KW-0675">Receptor</keyword>
<keyword id="KW-1185">Reference proteome</keyword>
<keyword id="KW-0723">Serine/threonine-protein kinase</keyword>
<keyword id="KW-0732">Signal</keyword>
<keyword id="KW-0808">Transferase</keyword>
<keyword id="KW-0812">Transmembrane</keyword>
<keyword id="KW-1133">Transmembrane helix</keyword>
<sequence>MLVLFLLLTIPTRAQRTTTETPKTEFIFRGFSGNQSNIVTTGAATIKLDGLLRLTDRNSNVTGTSFYHKPVRLLETNTSSTNSTIRSFSTSFVFVIIPTSSSNGGFGFTFTLSPTPDRTGAESAQYLGLLNKANDGNSTNHVFAVEFDTVQGFKDGADRTGNHIGLNFNSLTSDVQEPVVYYDNEDPNRKEDFPLQSGDPIRAILDYDGPTQTLNLTVYPANLKSRPVRPLISRPVPKLSQIVQEEMYVGFTAATGRDQSSAHYVMGWSFSSGGDLLTEDTLDLLELPRPPPNTAKKRGYNSQVLALIVALSGVTVILLALLFFFVMYKKRLQQGEVLEDWEINHPHRLRYKDLYAATDGFKENRIVGTGGFGTVFRGNLSSPSSDQIAVKKITPNSMQGVREFIAEIESLGRLRHKNLVNLQGWCKQKNDLLLIYDYIPNGSLDSLLYSRPRQSGVVLSWNARFKIAKGIASGLLYLHEEWEKVVIHRDIKPSNVLIEDDMNPRLGDFGLARLYERGSQSNTTVVVGTIGYMAPELARNGKSSSASDVFAFGVLLLEIVSGRRPTDSGTFFLADWVMELHARGEILHAVDPRLGFGYDGVEARLALVVGLLCCHQRPTSRPSMRTVLRYLNGDDDVPEIDNDWGYSDSSRSDLGSNFEGYVSSDRASSSVPSFSVTRVSSSSVISGR</sequence>
<organism>
    <name type="scientific">Arabidopsis thaliana</name>
    <name type="common">Mouse-ear cress</name>
    <dbReference type="NCBI Taxonomy" id="3702"/>
    <lineage>
        <taxon>Eukaryota</taxon>
        <taxon>Viridiplantae</taxon>
        <taxon>Streptophyta</taxon>
        <taxon>Embryophyta</taxon>
        <taxon>Tracheophyta</taxon>
        <taxon>Spermatophyta</taxon>
        <taxon>Magnoliopsida</taxon>
        <taxon>eudicotyledons</taxon>
        <taxon>Gunneridae</taxon>
        <taxon>Pentapetalae</taxon>
        <taxon>rosids</taxon>
        <taxon>malvids</taxon>
        <taxon>Brassicales</taxon>
        <taxon>Brassicaceae</taxon>
        <taxon>Camelineae</taxon>
        <taxon>Arabidopsis</taxon>
    </lineage>
</organism>